<evidence type="ECO:0000250" key="1">
    <source>
        <dbReference type="UniProtKB" id="A0A075TRC0"/>
    </source>
</evidence>
<evidence type="ECO:0000250" key="2">
    <source>
        <dbReference type="UniProtKB" id="Q5B0D0"/>
    </source>
</evidence>
<evidence type="ECO:0000255" key="3"/>
<evidence type="ECO:0000255" key="4">
    <source>
        <dbReference type="PROSITE-ProRule" id="PRU00258"/>
    </source>
</evidence>
<evidence type="ECO:0000255" key="5">
    <source>
        <dbReference type="PROSITE-ProRule" id="PRU01348"/>
    </source>
</evidence>
<evidence type="ECO:0000255" key="6">
    <source>
        <dbReference type="PROSITE-ProRule" id="PRU01363"/>
    </source>
</evidence>
<evidence type="ECO:0000256" key="7">
    <source>
        <dbReference type="SAM" id="MobiDB-lite"/>
    </source>
</evidence>
<evidence type="ECO:0000269" key="8">
    <source>
    </source>
</evidence>
<evidence type="ECO:0000269" key="9">
    <source>
    </source>
</evidence>
<evidence type="ECO:0000269" key="10">
    <source>
    </source>
</evidence>
<evidence type="ECO:0000303" key="11">
    <source>
    </source>
</evidence>
<evidence type="ECO:0000305" key="12"/>
<evidence type="ECO:0000305" key="13">
    <source>
    </source>
</evidence>
<reference key="1">
    <citation type="journal article" date="2008" name="PLoS Genet.">
        <title>Genomic islands in the pathogenic filamentous fungus Aspergillus fumigatus.</title>
        <authorList>
            <person name="Fedorova N.D."/>
            <person name="Khaldi N."/>
            <person name="Joardar V.S."/>
            <person name="Maiti R."/>
            <person name="Amedeo P."/>
            <person name="Anderson M.J."/>
            <person name="Crabtree J."/>
            <person name="Silva J.C."/>
            <person name="Badger J.H."/>
            <person name="Albarraq A."/>
            <person name="Angiuoli S."/>
            <person name="Bussey H."/>
            <person name="Bowyer P."/>
            <person name="Cotty P.J."/>
            <person name="Dyer P.S."/>
            <person name="Egan A."/>
            <person name="Galens K."/>
            <person name="Fraser-Liggett C.M."/>
            <person name="Haas B.J."/>
            <person name="Inman J.M."/>
            <person name="Kent R."/>
            <person name="Lemieux S."/>
            <person name="Malavazi I."/>
            <person name="Orvis J."/>
            <person name="Roemer T."/>
            <person name="Ronning C.M."/>
            <person name="Sundaram J.P."/>
            <person name="Sutton G."/>
            <person name="Turner G."/>
            <person name="Venter J.C."/>
            <person name="White O.R."/>
            <person name="Whitty B.R."/>
            <person name="Youngman P."/>
            <person name="Wolfe K.H."/>
            <person name="Goldman G.H."/>
            <person name="Wortman J.R."/>
            <person name="Jiang B."/>
            <person name="Denning D.W."/>
            <person name="Nierman W.C."/>
        </authorList>
    </citation>
    <scope>NUCLEOTIDE SEQUENCE [LARGE SCALE GENOMIC DNA]</scope>
    <source>
        <strain>ATCC 1007 / CBS 513.65 / DSM 816 / NCTC 3887 / NRRL 1 / QM 1276 / 107</strain>
    </source>
</reference>
<reference key="2">
    <citation type="journal article" date="2004" name="Int. J. Epidemiol.">
        <title>Clinical trial of patulin in the common cold. 1944.</title>
        <authorList>
            <consortium name="Patulin Clinical Trials Committee, Medical Research Council"/>
        </authorList>
    </citation>
    <scope>BIOTECHNOLOGY</scope>
</reference>
<reference key="3">
    <citation type="journal article" date="2009" name="Microbiology">
        <title>Molecular cloning and functional characterization of two CYP619 cytochrome P450s involved in biosynthesis of patulin in Aspergillus clavatus.</title>
        <authorList>
            <person name="Artigot M.P."/>
            <person name="Loiseau N."/>
            <person name="Laffitte J."/>
            <person name="Mas-Reguieg L."/>
            <person name="Tadrist S."/>
            <person name="Oswald I.P."/>
            <person name="Puel O."/>
        </authorList>
    </citation>
    <scope>FUNCTION</scope>
</reference>
<reference key="4">
    <citation type="journal article" date="2012" name="Food Chem. Toxicol.">
        <title>DNA damage in organs of mice treated acutely with patulin, a known mycotoxin.</title>
        <authorList>
            <person name="de Melo F.T."/>
            <person name="de Oliveira I.M."/>
            <person name="Greggio S."/>
            <person name="Dacosta J.C."/>
            <person name="Guecheva T.N."/>
            <person name="Saffi J."/>
            <person name="Henriques J.A."/>
            <person name="Rosa R.M."/>
        </authorList>
    </citation>
    <scope>BIOTECHNOLOGY</scope>
</reference>
<reference key="5">
    <citation type="journal article" date="2016" name="Tumor Biol.">
        <title>The potential effect of patulin on mice bearing melanoma cells: an anti-tumour or carcinogenic effect?</title>
        <authorList>
            <person name="Boussabbeh M."/>
            <person name="Ben Salem I."/>
            <person name="Rjiba-Touati K."/>
            <person name="Bouyahya C."/>
            <person name="Neffati F."/>
            <person name="Najjar M.F."/>
            <person name="Bacha H."/>
            <person name="Abid-Essefi S."/>
        </authorList>
    </citation>
    <scope>BIOTECHNOLOGY</scope>
</reference>
<dbReference type="EC" id="2.3.1.165" evidence="13"/>
<dbReference type="EMBL" id="DS027052">
    <property type="protein sequence ID" value="EAW11667.1"/>
    <property type="molecule type" value="Genomic_DNA"/>
</dbReference>
<dbReference type="RefSeq" id="XP_001273093.1">
    <property type="nucleotide sequence ID" value="XM_001273092.1"/>
</dbReference>
<dbReference type="SMR" id="A1CFL8"/>
<dbReference type="STRING" id="344612.A1CFL8"/>
<dbReference type="EnsemblFungi" id="EAW11667">
    <property type="protein sequence ID" value="EAW11667"/>
    <property type="gene ID" value="ACLA_093660"/>
</dbReference>
<dbReference type="GeneID" id="4704855"/>
<dbReference type="KEGG" id="act:ACLA_093660"/>
<dbReference type="VEuPathDB" id="FungiDB:ACLA_093660"/>
<dbReference type="eggNOG" id="KOG1202">
    <property type="taxonomic scope" value="Eukaryota"/>
</dbReference>
<dbReference type="HOGENOM" id="CLU_000022_35_3_1"/>
<dbReference type="OMA" id="SWVTHTT"/>
<dbReference type="OrthoDB" id="5334845at2759"/>
<dbReference type="UniPathway" id="UPA00918"/>
<dbReference type="Proteomes" id="UP000006701">
    <property type="component" value="Unassembled WGS sequence"/>
</dbReference>
<dbReference type="GO" id="GO:0005829">
    <property type="term" value="C:cytosol"/>
    <property type="evidence" value="ECO:0000250"/>
    <property type="project" value="GO_Central"/>
</dbReference>
<dbReference type="GO" id="GO:0004315">
    <property type="term" value="F:3-oxoacyl-[acyl-carrier-protein] synthase activity"/>
    <property type="evidence" value="ECO:0007669"/>
    <property type="project" value="InterPro"/>
</dbReference>
<dbReference type="GO" id="GO:0050641">
    <property type="term" value="F:6-methylsalicylic acid synthase activity"/>
    <property type="evidence" value="ECO:0000250"/>
    <property type="project" value="GO_Central"/>
</dbReference>
<dbReference type="GO" id="GO:0004312">
    <property type="term" value="F:fatty acid synthase activity"/>
    <property type="evidence" value="ECO:0007669"/>
    <property type="project" value="TreeGrafter"/>
</dbReference>
<dbReference type="GO" id="GO:0031177">
    <property type="term" value="F:phosphopantetheine binding"/>
    <property type="evidence" value="ECO:0007669"/>
    <property type="project" value="InterPro"/>
</dbReference>
<dbReference type="GO" id="GO:0006633">
    <property type="term" value="P:fatty acid biosynthetic process"/>
    <property type="evidence" value="ECO:0007669"/>
    <property type="project" value="InterPro"/>
</dbReference>
<dbReference type="GO" id="GO:0140723">
    <property type="term" value="P:patulin biosynthetic process"/>
    <property type="evidence" value="ECO:0000250"/>
    <property type="project" value="GO_Central"/>
</dbReference>
<dbReference type="CDD" id="cd05274">
    <property type="entry name" value="KR_FAS_SDR_x"/>
    <property type="match status" value="1"/>
</dbReference>
<dbReference type="CDD" id="cd00833">
    <property type="entry name" value="PKS"/>
    <property type="match status" value="1"/>
</dbReference>
<dbReference type="Gene3D" id="3.40.47.10">
    <property type="match status" value="1"/>
</dbReference>
<dbReference type="Gene3D" id="1.10.1200.10">
    <property type="entry name" value="ACP-like"/>
    <property type="match status" value="1"/>
</dbReference>
<dbReference type="Gene3D" id="3.30.70.250">
    <property type="entry name" value="Malonyl-CoA ACP transacylase, ACP-binding"/>
    <property type="match status" value="1"/>
</dbReference>
<dbReference type="Gene3D" id="3.40.366.10">
    <property type="entry name" value="Malonyl-Coenzyme A Acyl Carrier Protein, domain 2"/>
    <property type="match status" value="1"/>
</dbReference>
<dbReference type="Gene3D" id="3.40.50.720">
    <property type="entry name" value="NAD(P)-binding Rossmann-like Domain"/>
    <property type="match status" value="1"/>
</dbReference>
<dbReference type="Gene3D" id="3.10.129.110">
    <property type="entry name" value="Polyketide synthase dehydratase"/>
    <property type="match status" value="1"/>
</dbReference>
<dbReference type="InterPro" id="IPR001227">
    <property type="entry name" value="Ac_transferase_dom_sf"/>
</dbReference>
<dbReference type="InterPro" id="IPR036736">
    <property type="entry name" value="ACP-like_sf"/>
</dbReference>
<dbReference type="InterPro" id="IPR014043">
    <property type="entry name" value="Acyl_transferase_dom"/>
</dbReference>
<dbReference type="InterPro" id="IPR016035">
    <property type="entry name" value="Acyl_Trfase/lysoPLipase"/>
</dbReference>
<dbReference type="InterPro" id="IPR018201">
    <property type="entry name" value="Ketoacyl_synth_AS"/>
</dbReference>
<dbReference type="InterPro" id="IPR014031">
    <property type="entry name" value="Ketoacyl_synth_C"/>
</dbReference>
<dbReference type="InterPro" id="IPR014030">
    <property type="entry name" value="Ketoacyl_synth_N"/>
</dbReference>
<dbReference type="InterPro" id="IPR016036">
    <property type="entry name" value="Malonyl_transacylase_ACP-bd"/>
</dbReference>
<dbReference type="InterPro" id="IPR036291">
    <property type="entry name" value="NAD(P)-bd_dom_sf"/>
</dbReference>
<dbReference type="InterPro" id="IPR032821">
    <property type="entry name" value="PKS_assoc"/>
</dbReference>
<dbReference type="InterPro" id="IPR020841">
    <property type="entry name" value="PKS_Beta-ketoAc_synthase_dom"/>
</dbReference>
<dbReference type="InterPro" id="IPR042104">
    <property type="entry name" value="PKS_dehydratase_sf"/>
</dbReference>
<dbReference type="InterPro" id="IPR020807">
    <property type="entry name" value="PKS_DH"/>
</dbReference>
<dbReference type="InterPro" id="IPR049552">
    <property type="entry name" value="PKS_DH_N"/>
</dbReference>
<dbReference type="InterPro" id="IPR013968">
    <property type="entry name" value="PKS_KR"/>
</dbReference>
<dbReference type="InterPro" id="IPR049900">
    <property type="entry name" value="PKS_mFAS_DH"/>
</dbReference>
<dbReference type="InterPro" id="IPR050091">
    <property type="entry name" value="PKS_NRPS_Biosynth_Enz"/>
</dbReference>
<dbReference type="InterPro" id="IPR020806">
    <property type="entry name" value="PKS_PP-bd"/>
</dbReference>
<dbReference type="InterPro" id="IPR009081">
    <property type="entry name" value="PP-bd_ACP"/>
</dbReference>
<dbReference type="InterPro" id="IPR016039">
    <property type="entry name" value="Thiolase-like"/>
</dbReference>
<dbReference type="PANTHER" id="PTHR43775">
    <property type="entry name" value="FATTY ACID SYNTHASE"/>
    <property type="match status" value="1"/>
</dbReference>
<dbReference type="PANTHER" id="PTHR43775:SF22">
    <property type="entry name" value="SYNTHASE, PUTATIVE (JCVI)-RELATED"/>
    <property type="match status" value="1"/>
</dbReference>
<dbReference type="Pfam" id="PF00698">
    <property type="entry name" value="Acyl_transf_1"/>
    <property type="match status" value="1"/>
</dbReference>
<dbReference type="Pfam" id="PF16197">
    <property type="entry name" value="KAsynt_C_assoc"/>
    <property type="match status" value="1"/>
</dbReference>
<dbReference type="Pfam" id="PF00109">
    <property type="entry name" value="ketoacyl-synt"/>
    <property type="match status" value="1"/>
</dbReference>
<dbReference type="Pfam" id="PF02801">
    <property type="entry name" value="Ketoacyl-synt_C"/>
    <property type="match status" value="1"/>
</dbReference>
<dbReference type="Pfam" id="PF08659">
    <property type="entry name" value="KR"/>
    <property type="match status" value="1"/>
</dbReference>
<dbReference type="Pfam" id="PF21089">
    <property type="entry name" value="PKS_DH_N"/>
    <property type="match status" value="1"/>
</dbReference>
<dbReference type="Pfam" id="PF00550">
    <property type="entry name" value="PP-binding"/>
    <property type="match status" value="1"/>
</dbReference>
<dbReference type="SMART" id="SM00827">
    <property type="entry name" value="PKS_AT"/>
    <property type="match status" value="1"/>
</dbReference>
<dbReference type="SMART" id="SM00826">
    <property type="entry name" value="PKS_DH"/>
    <property type="match status" value="1"/>
</dbReference>
<dbReference type="SMART" id="SM00822">
    <property type="entry name" value="PKS_KR"/>
    <property type="match status" value="1"/>
</dbReference>
<dbReference type="SMART" id="SM00825">
    <property type="entry name" value="PKS_KS"/>
    <property type="match status" value="1"/>
</dbReference>
<dbReference type="SMART" id="SM00823">
    <property type="entry name" value="PKS_PP"/>
    <property type="match status" value="1"/>
</dbReference>
<dbReference type="SMART" id="SM01294">
    <property type="entry name" value="PKS_PP_betabranch"/>
    <property type="match status" value="1"/>
</dbReference>
<dbReference type="SUPFAM" id="SSF47336">
    <property type="entry name" value="ACP-like"/>
    <property type="match status" value="1"/>
</dbReference>
<dbReference type="SUPFAM" id="SSF52151">
    <property type="entry name" value="FabD/lysophospholipase-like"/>
    <property type="match status" value="1"/>
</dbReference>
<dbReference type="SUPFAM" id="SSF51735">
    <property type="entry name" value="NAD(P)-binding Rossmann-fold domains"/>
    <property type="match status" value="2"/>
</dbReference>
<dbReference type="SUPFAM" id="SSF55048">
    <property type="entry name" value="Probable ACP-binding domain of malonyl-CoA ACP transacylase"/>
    <property type="match status" value="1"/>
</dbReference>
<dbReference type="SUPFAM" id="SSF53901">
    <property type="entry name" value="Thiolase-like"/>
    <property type="match status" value="1"/>
</dbReference>
<dbReference type="PROSITE" id="PS50075">
    <property type="entry name" value="CARRIER"/>
    <property type="match status" value="1"/>
</dbReference>
<dbReference type="PROSITE" id="PS00606">
    <property type="entry name" value="KS3_1"/>
    <property type="match status" value="1"/>
</dbReference>
<dbReference type="PROSITE" id="PS52004">
    <property type="entry name" value="KS3_2"/>
    <property type="match status" value="1"/>
</dbReference>
<dbReference type="PROSITE" id="PS52019">
    <property type="entry name" value="PKS_MFAS_DH"/>
    <property type="match status" value="1"/>
</dbReference>
<feature type="chain" id="PRO_0000437111" description="6-methylcalicylic acide synthase">
    <location>
        <begin position="1"/>
        <end position="1720"/>
    </location>
</feature>
<feature type="domain" description="Ketosynthase family 3 (KS3)" evidence="5">
    <location>
        <begin position="1"/>
        <end position="399"/>
    </location>
</feature>
<feature type="domain" description="PKS/mFAS DH" evidence="6">
    <location>
        <begin position="868"/>
        <end position="1144"/>
    </location>
</feature>
<feature type="domain" description="Carrier" evidence="4">
    <location>
        <begin position="1644"/>
        <end position="1718"/>
    </location>
</feature>
<feature type="region of interest" description="Disordered" evidence="7">
    <location>
        <begin position="1"/>
        <end position="31"/>
    </location>
</feature>
<feature type="region of interest" description="Malonyl-CoA:ACP transacylase (MAT) domain" evidence="3">
    <location>
        <begin position="509"/>
        <end position="823"/>
    </location>
</feature>
<feature type="region of interest" description="Dehydratase (DH) domain" evidence="3">
    <location>
        <begin position="868"/>
        <end position="1139"/>
    </location>
</feature>
<feature type="region of interest" description="N-terminal hotdog fold" evidence="6">
    <location>
        <begin position="868"/>
        <end position="987"/>
    </location>
</feature>
<feature type="region of interest" description="C-terminal hotdog fold" evidence="6">
    <location>
        <begin position="1001"/>
        <end position="1144"/>
    </location>
</feature>
<feature type="region of interest" description="Product template (PT) domain" evidence="3">
    <location>
        <begin position="1148"/>
        <end position="1545"/>
    </location>
</feature>
<feature type="compositionally biased region" description="Basic and acidic residues" evidence="7">
    <location>
        <begin position="16"/>
        <end position="30"/>
    </location>
</feature>
<feature type="active site" description="For beta-ketoacyl synthase activity" evidence="5">
    <location>
        <position position="146"/>
    </location>
</feature>
<feature type="active site" description="For beta-ketoacyl synthase activity" evidence="5">
    <location>
        <position position="281"/>
    </location>
</feature>
<feature type="active site" description="For beta-ketoacyl synthase activity" evidence="5">
    <location>
        <position position="321"/>
    </location>
</feature>
<feature type="active site" description="Proton acceptor; for dehydratase activity" evidence="6">
    <location>
        <position position="900"/>
    </location>
</feature>
<feature type="active site" description="Proton donor; for dehydratase activity" evidence="6">
    <location>
        <position position="1065"/>
    </location>
</feature>
<feature type="modified residue" description="O-(pantetheine 4'-phosphoryl)serine" evidence="4">
    <location>
        <position position="1678"/>
    </location>
</feature>
<organism>
    <name type="scientific">Aspergillus clavatus (strain ATCC 1007 / CBS 513.65 / DSM 816 / NCTC 3887 / NRRL 1 / QM 1276 / 107)</name>
    <dbReference type="NCBI Taxonomy" id="344612"/>
    <lineage>
        <taxon>Eukaryota</taxon>
        <taxon>Fungi</taxon>
        <taxon>Dikarya</taxon>
        <taxon>Ascomycota</taxon>
        <taxon>Pezizomycotina</taxon>
        <taxon>Eurotiomycetes</taxon>
        <taxon>Eurotiomycetidae</taxon>
        <taxon>Eurotiales</taxon>
        <taxon>Aspergillaceae</taxon>
        <taxon>Aspergillus</taxon>
        <taxon>Aspergillus subgen. Fumigati</taxon>
    </lineage>
</organism>
<name>PATK_ASPCL</name>
<gene>
    <name evidence="11" type="primary">patK</name>
    <name type="ORF">ACLA_093660</name>
</gene>
<keyword id="KW-0963">Cytoplasm</keyword>
<keyword id="KW-0511">Multifunctional enzyme</keyword>
<keyword id="KW-0521">NADP</keyword>
<keyword id="KW-0596">Phosphopantetheine</keyword>
<keyword id="KW-0597">Phosphoprotein</keyword>
<keyword id="KW-1185">Reference proteome</keyword>
<keyword id="KW-0808">Transferase</keyword>
<proteinExistence type="evidence at protein level"/>
<comment type="function">
    <text evidence="1 13">6-methylsalicylic acid synthase; part of the gene cluster that mediates the biosynthesis of patulin, an acetate-derived tetraketide mycotoxin produced by several fungal species that shows antimicrobial properties against several bacteria (By similarity). PatK catalyzes the first step of the pathway which is the synthesis of 6-methylsalicylic acid via condensation of 1 acetate and 3 malonate units (By similarity). The pathway begins with the synthesis of 6-methylsalicylic acid by the polyketide synthase (PKS) patK via condensation of acetate and malonate units. The 6-methylsalicylic acid decarboxylase patG then catalyzes the decarboxylation of 6-methylsalicylic acid to yield m-cresol (also known as 3-methylphenol). These first reactions occur in the cytosol. The intermediate m-cresol is then transported into the endoplasmic reticulum where the cytochrome P450 monooxygenase patH converts it to m-hydroxybenzyl alcohol, which is further converted to gentisyl alcohol by the cytochrome P450 monooxygenase patI. The oxidoreductases patJ and patO further convert gentisyl alcohol to isoepoxydon in the vacuole. PatN catalyzes then the transformation of isoepoxydon into phyllostine. The cluster protein patF is responsible for the conversion from phyllostine to neopatulin whereas the alcohol dehydrogenase patD converts neopatulin to E-ascladiol. The steps between isoepoxydon and E-ascladiol occur in the cytosol, and E-ascladiol is probably secreted to the extracellular space by one of the cluster-specific transporters patC or patM. Finally, the secreted patulin synthase patE catalyzes the conversion of E-ascladiol to patulin (Probable) (PubMed:19383676).</text>
</comment>
<comment type="catalytic activity">
    <reaction evidence="13">
        <text>3 malonyl-CoA + acetyl-CoA + NADPH + 3 H(+) = 6-methylsalicylate + 3 CO2 + NADP(+) + 4 CoA + H2O</text>
        <dbReference type="Rhea" id="RHEA:12240"/>
        <dbReference type="ChEBI" id="CHEBI:15377"/>
        <dbReference type="ChEBI" id="CHEBI:15378"/>
        <dbReference type="ChEBI" id="CHEBI:16526"/>
        <dbReference type="ChEBI" id="CHEBI:36658"/>
        <dbReference type="ChEBI" id="CHEBI:57287"/>
        <dbReference type="ChEBI" id="CHEBI:57288"/>
        <dbReference type="ChEBI" id="CHEBI:57384"/>
        <dbReference type="ChEBI" id="CHEBI:57783"/>
        <dbReference type="ChEBI" id="CHEBI:58349"/>
        <dbReference type="EC" id="2.3.1.165"/>
    </reaction>
    <physiologicalReaction direction="left-to-right" evidence="13">
        <dbReference type="Rhea" id="RHEA:12241"/>
    </physiologicalReaction>
</comment>
<comment type="pathway">
    <text evidence="13">Mycotoxin biosynthesis; patulin biosynthesis.</text>
</comment>
<comment type="subcellular location">
    <subcellularLocation>
        <location evidence="1">Cytoplasm</location>
        <location evidence="1">Cytosol</location>
    </subcellularLocation>
</comment>
<comment type="domain">
    <text evidence="2">Multidomain protein; including a starter unit:ACP transacylase (SAT) that selects the starter unit; a ketosynthase (KS) that catalyzes repeated decarboxylative condensation to elongate the polyketide backbone; a malonyl-CoA:ACP transacylase (MAT) that selects and transfers the extender unit malonyl-CoA; a product template (PT) domain that controls the immediate cyclization regioselectivity of the reactive polyketide backbone; and an acyl-carrier protein (ACP) that serves as the tether of the growing and completed polyketide via its phosphopantetheinyl arm (By similarity).</text>
</comment>
<comment type="biotechnology">
    <text evidence="8 9 10">Patulin was originally used as an antibiotic and specifically trialed to be used against the common cold, but it is no longer used for that purpose since it has been shown to induce immunological, neurological and gastrointestinal effects (PubMed:15082620). Genotoxic effects of patulin with dose-dependent increase in DNA strand breaks in brain, liver and kidneys have been detected in mice (PubMed:22222931). However, more recently, it has been proposed that patulin might also have anti-tumor properties (PubMed:26619846).</text>
</comment>
<sequence>MDKQSASGEIPAMRWEPYHRRDPRNAKELSKTTSRGYFLDHLEDFDSQFFGISPKEAEQMDPQQRISLEVAWEALEDAGIPAKGLSGSDTAVFWGVNSDDYSKLVLEDLPNIEAWMGIGTAYCGIPNRISYHLNLMGPSTAVDAACASSLVAIHHGVQAIQLGESKIAIVGGVNALCGPGLTRVLDKAGAISSEGFCRSFDDEAKGYGRGEGAAAIILKNLSRAINDKDRILAVIKGSAVAQDGKTNGIMAPNAKAQQLVAQNALAVGNIDPLTVRYVEAHATSTPLGDPTEISAIAAVYGVGRDSQDPCFIGSIKPNIGHLEAGAGAMGFIKATLAIRKGILPPQANLNKLNSRIDWDKAGVKVVQEATKWPETDTIRRASICSYGYGGTVSHAVIEQFLPLSGLESLQTQSPDGPGVLLLSGPQQKRLSVQAETLRKWIAQDGRNHDLSSVLTTLATRRDHHDYRAAMVVESHDDAETALEALAKGADHPLVAQGRVLGTDIRKDVVWVFSGHGAQWTDMGKELLNNPVFYRAIQPLDELVQAEIGLSPIEMLLTGDFDSSDRVQILTYIMQIGISAVLKSNGVFPQAIIGHSVGEIAASVVAGALTPAEGALIVTRRAALYRRVMGQGGMILVNLPASQVEQELGQREDLVVAIESSPSSCVVAGDRDVVAQAAESFKERGVKTFTVKTDIAFHSPTLNGLIDPMLEALAEDLAPSTPTVRLFSTSLVDPRGQDLRDIHYWTNNMVNRVRLTSAVNAAVEEGYRIFLEVSSHPVVTHSINETLMDGGLEDFAVIPTLLRQKPTEKHILYSIAQLHCRGAEVDWKAQLPGPWADGLPTTTWMHKPIWRKIESAPLHTGLTHDVEKHTLLGQRIGIAGTNTTVYTTRLDNDTKPFPGSHPLHGTEIVPAAGLINTFMKGTGGRRLQNVVLRVPVAINAPRSVQVVVQEDQVKIMSRLLSDTPQATEDDSSWATHTTAYWARDIQEAVDPIDIAAVKKRLGTRIRDDFSINYLDQVGVSAMGFPWAITEHYHKDKEMIARVDVNPAVTGDAPLPWDSSSWAPILDAATSVGSTVFGTPALRMPAQIDRVDIFTSQDPPKIGWLYVEDASDAAPTSHVSVLNEAGEVVAKFTAMRFSEIEGTPGVSGSMESLVHQLAWPPATPAEEPLSIDTVLLVSSDAATMRQYANTIPRGVRSFEFSSVQDLISQDKSGLRLDKGTAVAYIPGEVQSLEEIPAASESFTWEVLELVKYIVKGGLPLKAFILTSNVGSGETPTALAQAPLFGLARIIASEHPDLGCLIDSENPVFPLTAMRYIQGADVIRINDDVARTARLRSLPRNKLHPASQPPRLLPRSEGTYLITGGLGVLGLETADFLVENGARRLILISRRALPPRRTWDAAPSDLQPTLAKIRNLESRGATVHILPLDISHPAAATQLSTALDTLSLPPVLGVVHAAGVLDNQLILETTRDAFTRVLAPKIAGALALHAVFPPNTLDFFLLFSSCGNLFGFPGQASYGAGNAFLDTLATHRARLGDAAVAVQWTSWRGMGMGASTEFINAELESKGITDVTRDEAFGAWLHLARYDIDHGVVLRSLAFDEGEPLPVSILTDIAVRRVGVAAAGDVPGTAAAGGADAIPSSGPELKVYLDEKIRGCVAKVLQMGAEDVDSKAALADLGVDSVMTVSLRRQLQQTLKVKVPSTLTWSHPTVSHLVGWFAEKVGK</sequence>
<protein>
    <recommendedName>
        <fullName evidence="11">6-methylcalicylic acide synthase</fullName>
        <shortName evidence="11">6MSAS</shortName>
        <ecNumber evidence="13">2.3.1.165</ecNumber>
    </recommendedName>
    <alternativeName>
        <fullName evidence="12">Non-reducing polyketide synthase patK</fullName>
    </alternativeName>
    <alternativeName>
        <fullName evidence="11">Patulin synthesis protein K</fullName>
    </alternativeName>
</protein>
<accession>A1CFL8</accession>